<comment type="subunit">
    <text evidence="1">Component of the small ribosomal subunit. Mature ribosomes consist of a small (40S) and a large (60S) subunit. The 40S subunit contains about 33 different proteins and 1 molecule of RNA (18S). The 60S subunit contains about 49 different proteins and 3 molecules of RNA (25S, 5.8S and 5S).</text>
</comment>
<comment type="subcellular location">
    <subcellularLocation>
        <location evidence="1">Cytoplasm</location>
    </subcellularLocation>
</comment>
<comment type="similarity">
    <text evidence="1">Belongs to the eukaryotic ribosomal protein eS1 family.</text>
</comment>
<comment type="sequence caution" evidence="3">
    <conflict type="erroneous gene model prediction">
        <sequence resource="EMBL-CDS" id="EEP79206"/>
    </conflict>
</comment>
<accession>C4JMJ4</accession>
<dbReference type="EMBL" id="CH476616">
    <property type="protein sequence ID" value="EEP79206.1"/>
    <property type="status" value="ALT_SEQ"/>
    <property type="molecule type" value="Genomic_DNA"/>
</dbReference>
<dbReference type="RefSeq" id="XP_002544535.1">
    <property type="nucleotide sequence ID" value="XM_002544489.1"/>
</dbReference>
<dbReference type="SMR" id="C4JMJ4"/>
<dbReference type="FunCoup" id="C4JMJ4">
    <property type="interactions" value="1130"/>
</dbReference>
<dbReference type="STRING" id="336963.C4JMJ4"/>
<dbReference type="GeneID" id="8444024"/>
<dbReference type="KEGG" id="ure:UREG_04052"/>
<dbReference type="VEuPathDB" id="FungiDB:UREG_04052"/>
<dbReference type="eggNOG" id="KOG1628">
    <property type="taxonomic scope" value="Eukaryota"/>
</dbReference>
<dbReference type="HOGENOM" id="CLU_062507_0_0_1"/>
<dbReference type="InParanoid" id="C4JMJ4"/>
<dbReference type="OrthoDB" id="9834376at2759"/>
<dbReference type="Proteomes" id="UP000002058">
    <property type="component" value="Unassembled WGS sequence"/>
</dbReference>
<dbReference type="GO" id="GO:0022627">
    <property type="term" value="C:cytosolic small ribosomal subunit"/>
    <property type="evidence" value="ECO:0007669"/>
    <property type="project" value="UniProtKB-UniRule"/>
</dbReference>
<dbReference type="GO" id="GO:0003735">
    <property type="term" value="F:structural constituent of ribosome"/>
    <property type="evidence" value="ECO:0007669"/>
    <property type="project" value="UniProtKB-UniRule"/>
</dbReference>
<dbReference type="GO" id="GO:0006412">
    <property type="term" value="P:translation"/>
    <property type="evidence" value="ECO:0007669"/>
    <property type="project" value="UniProtKB-UniRule"/>
</dbReference>
<dbReference type="HAMAP" id="MF_03122">
    <property type="entry name" value="Ribosomal_eS1_euk"/>
    <property type="match status" value="1"/>
</dbReference>
<dbReference type="InterPro" id="IPR001593">
    <property type="entry name" value="Ribosomal_eS1"/>
</dbReference>
<dbReference type="InterPro" id="IPR018281">
    <property type="entry name" value="Ribosomal_eS1_CS"/>
</dbReference>
<dbReference type="InterPro" id="IPR027500">
    <property type="entry name" value="Ribosomal_eS1_euk"/>
</dbReference>
<dbReference type="PANTHER" id="PTHR11830">
    <property type="entry name" value="40S RIBOSOMAL PROTEIN S3A"/>
    <property type="match status" value="1"/>
</dbReference>
<dbReference type="Pfam" id="PF01015">
    <property type="entry name" value="Ribosomal_S3Ae"/>
    <property type="match status" value="1"/>
</dbReference>
<dbReference type="SMART" id="SM01397">
    <property type="entry name" value="Ribosomal_S3Ae"/>
    <property type="match status" value="1"/>
</dbReference>
<dbReference type="PROSITE" id="PS01191">
    <property type="entry name" value="RIBOSOMAL_S3AE"/>
    <property type="match status" value="1"/>
</dbReference>
<proteinExistence type="inferred from homology"/>
<protein>
    <recommendedName>
        <fullName evidence="1">Small ribosomal subunit protein eS1</fullName>
    </recommendedName>
    <alternativeName>
        <fullName evidence="3">40S ribosomal protein S1</fullName>
    </alternativeName>
</protein>
<reference key="1">
    <citation type="journal article" date="2009" name="Genome Res.">
        <title>Comparative genomic analyses of the human fungal pathogens Coccidioides and their relatives.</title>
        <authorList>
            <person name="Sharpton T.J."/>
            <person name="Stajich J.E."/>
            <person name="Rounsley S.D."/>
            <person name="Gardner M.J."/>
            <person name="Wortman J.R."/>
            <person name="Jordar V.S."/>
            <person name="Maiti R."/>
            <person name="Kodira C.D."/>
            <person name="Neafsey D.E."/>
            <person name="Zeng Q."/>
            <person name="Hung C.-Y."/>
            <person name="McMahan C."/>
            <person name="Muszewska A."/>
            <person name="Grynberg M."/>
            <person name="Mandel M.A."/>
            <person name="Kellner E.M."/>
            <person name="Barker B.M."/>
            <person name="Galgiani J.N."/>
            <person name="Orbach M.J."/>
            <person name="Kirkland T.N."/>
            <person name="Cole G.T."/>
            <person name="Henn M.R."/>
            <person name="Birren B.W."/>
            <person name="Taylor J.W."/>
        </authorList>
    </citation>
    <scope>NUCLEOTIDE SEQUENCE [LARGE SCALE GENOMIC DNA]</scope>
    <source>
        <strain>UAMH 1704</strain>
    </source>
</reference>
<evidence type="ECO:0000255" key="1">
    <source>
        <dbReference type="HAMAP-Rule" id="MF_03122"/>
    </source>
</evidence>
<evidence type="ECO:0000256" key="2">
    <source>
        <dbReference type="SAM" id="MobiDB-lite"/>
    </source>
</evidence>
<evidence type="ECO:0000305" key="3"/>
<gene>
    <name evidence="1" type="primary">RPS1</name>
    <name type="ORF">UREG_04052</name>
</gene>
<organism>
    <name type="scientific">Uncinocarpus reesii (strain UAMH 1704)</name>
    <dbReference type="NCBI Taxonomy" id="336963"/>
    <lineage>
        <taxon>Eukaryota</taxon>
        <taxon>Fungi</taxon>
        <taxon>Dikarya</taxon>
        <taxon>Ascomycota</taxon>
        <taxon>Pezizomycotina</taxon>
        <taxon>Eurotiomycetes</taxon>
        <taxon>Eurotiomycetidae</taxon>
        <taxon>Onygenales</taxon>
        <taxon>Onygenaceae</taxon>
        <taxon>Uncinocarpus</taxon>
    </lineage>
</organism>
<feature type="initiator methionine" description="Removed" evidence="1">
    <location>
        <position position="1"/>
    </location>
</feature>
<feature type="chain" id="PRO_0000389415" description="Small ribosomal subunit protein eS1">
    <location>
        <begin position="2"/>
        <end position="255"/>
    </location>
</feature>
<feature type="region of interest" description="Disordered" evidence="2">
    <location>
        <begin position="1"/>
        <end position="22"/>
    </location>
</feature>
<feature type="compositionally biased region" description="Basic residues" evidence="2">
    <location>
        <begin position="1"/>
        <end position="18"/>
    </location>
</feature>
<feature type="modified residue" description="N-acetylalanine; partial" evidence="1">
    <location>
        <position position="2"/>
    </location>
</feature>
<sequence length="255" mass="29130">MAVGKNKRLSKGKKGLKKRAQDPFSRKDEYLVKAPSTFATRDVGKTIVNRTVGLKNANDSLKGRIFEVSLADLQNDQAHSFRKIKLRVDEVQGKNCLTNFHGMDFTSDKLRSLVRKWQSLIEANVTVKTTDDYLVRLFAIAFTKRRSFQVKKTTYARSSQIRAIRKKMVEIIQREASTRTLTQLTKLVPEVIGREIEKATRGIYPLQNVHIRKVKLLKQPKFDIGALLALHGESSTDDKGQKVEREFKEQVLESV</sequence>
<name>RS3A_UNCRE</name>
<keyword id="KW-0007">Acetylation</keyword>
<keyword id="KW-0963">Cytoplasm</keyword>
<keyword id="KW-1185">Reference proteome</keyword>
<keyword id="KW-0687">Ribonucleoprotein</keyword>
<keyword id="KW-0689">Ribosomal protein</keyword>